<evidence type="ECO:0000250" key="1"/>
<evidence type="ECO:0000255" key="2"/>
<evidence type="ECO:0000303" key="3">
    <source>
    </source>
</evidence>
<evidence type="ECO:0000305" key="4"/>
<proteinExistence type="evidence at transcript level"/>
<protein>
    <recommendedName>
        <fullName>CASP-like protein 5C1</fullName>
        <shortName>ZmCASPL5C1</shortName>
    </recommendedName>
</protein>
<reference key="1">
    <citation type="journal article" date="2009" name="Plant Mol. Biol.">
        <title>Insights into corn genes derived from large-scale cDNA sequencing.</title>
        <authorList>
            <person name="Alexandrov N.N."/>
            <person name="Brover V.V."/>
            <person name="Freidin S."/>
            <person name="Troukhan M.E."/>
            <person name="Tatarinova T.V."/>
            <person name="Zhang H."/>
            <person name="Swaller T.J."/>
            <person name="Lu Y.-P."/>
            <person name="Bouck J."/>
            <person name="Flavell R.B."/>
            <person name="Feldmann K.A."/>
        </authorList>
    </citation>
    <scope>NUCLEOTIDE SEQUENCE [LARGE SCALE MRNA] (ISOFORMS 1 AND 2)</scope>
    <source>
        <tissue>Flower</tissue>
        <tissue>Root</tissue>
    </source>
</reference>
<reference key="2">
    <citation type="journal article" date="2014" name="Plant Physiol.">
        <title>Functional and evolutionary analysis of the CASPARIAN STRIP MEMBRANE DOMAIN PROTEIN family.</title>
        <authorList>
            <person name="Roppolo D."/>
            <person name="Boeckmann B."/>
            <person name="Pfister A."/>
            <person name="Boutet E."/>
            <person name="Rubio M.C."/>
            <person name="Denervaud-Tendon V."/>
            <person name="Vermeer J.E."/>
            <person name="Gheyselinck J."/>
            <person name="Xenarios I."/>
            <person name="Geldner N."/>
        </authorList>
    </citation>
    <scope>GENE FAMILY</scope>
    <scope>NOMENCLATURE</scope>
</reference>
<organism>
    <name type="scientific">Zea mays</name>
    <name type="common">Maize</name>
    <dbReference type="NCBI Taxonomy" id="4577"/>
    <lineage>
        <taxon>Eukaryota</taxon>
        <taxon>Viridiplantae</taxon>
        <taxon>Streptophyta</taxon>
        <taxon>Embryophyta</taxon>
        <taxon>Tracheophyta</taxon>
        <taxon>Spermatophyta</taxon>
        <taxon>Magnoliopsida</taxon>
        <taxon>Liliopsida</taxon>
        <taxon>Poales</taxon>
        <taxon>Poaceae</taxon>
        <taxon>PACMAD clade</taxon>
        <taxon>Panicoideae</taxon>
        <taxon>Andropogonodae</taxon>
        <taxon>Andropogoneae</taxon>
        <taxon>Tripsacinae</taxon>
        <taxon>Zea</taxon>
    </lineage>
</organism>
<comment type="subunit">
    <text evidence="1">Homodimer and heterodimers.</text>
</comment>
<comment type="subcellular location">
    <subcellularLocation>
        <location evidence="1">Cell membrane</location>
        <topology evidence="1">Multi-pass membrane protein</topology>
    </subcellularLocation>
</comment>
<comment type="alternative products">
    <event type="alternative splicing"/>
    <isoform>
        <id>B6U300-1</id>
        <name>1</name>
        <sequence type="displayed"/>
    </isoform>
    <isoform>
        <id>B6U300-2</id>
        <name>2</name>
        <sequence type="described" ref="VSP_044078"/>
    </isoform>
</comment>
<comment type="similarity">
    <text evidence="4">Belongs to the Casparian strip membrane proteins (CASP) family.</text>
</comment>
<sequence length="159" mass="16659">MDNGDRSGAGAGAVGSAGSLGLRVGQAVFSSASLLFMSVGVEFFSYTAFCFLVTIMGLVIPWSCTLAMIDVYSVFVGCPLRVPGVMVIVVVGDCALSIVSFAAACSSAAVIDLLLQLHGSHSSPTFCGRYQLSAMMAFLSWLLMAASATFNLWFVASRW</sequence>
<keyword id="KW-0025">Alternative splicing</keyword>
<keyword id="KW-1003">Cell membrane</keyword>
<keyword id="KW-0472">Membrane</keyword>
<keyword id="KW-1185">Reference proteome</keyword>
<keyword id="KW-0812">Transmembrane</keyword>
<keyword id="KW-1133">Transmembrane helix</keyword>
<feature type="chain" id="PRO_0000418698" description="CASP-like protein 5C1">
    <location>
        <begin position="1"/>
        <end position="159"/>
    </location>
</feature>
<feature type="topological domain" description="Cytoplasmic" evidence="2">
    <location>
        <begin position="1"/>
        <end position="6"/>
    </location>
</feature>
<feature type="transmembrane region" description="Helical" evidence="2">
    <location>
        <begin position="7"/>
        <end position="29"/>
    </location>
</feature>
<feature type="topological domain" description="Extracellular" evidence="2">
    <location>
        <begin position="30"/>
        <end position="48"/>
    </location>
</feature>
<feature type="transmembrane region" description="Helical" evidence="2">
    <location>
        <begin position="49"/>
        <end position="69"/>
    </location>
</feature>
<feature type="topological domain" description="Cytoplasmic" evidence="2">
    <location>
        <begin position="70"/>
        <end position="94"/>
    </location>
</feature>
<feature type="transmembrane region" description="Helical" evidence="2">
    <location>
        <begin position="95"/>
        <end position="117"/>
    </location>
</feature>
<feature type="topological domain" description="Extracellular" evidence="2">
    <location>
        <begin position="118"/>
        <end position="134"/>
    </location>
</feature>
<feature type="transmembrane region" description="Helical" evidence="2">
    <location>
        <begin position="135"/>
        <end position="155"/>
    </location>
</feature>
<feature type="topological domain" description="Cytoplasmic" evidence="2">
    <location>
        <begin position="156"/>
        <end position="159"/>
    </location>
</feature>
<feature type="splice variant" id="VSP_044078" description="In isoform 2." evidence="3">
    <original>W</original>
    <variation>LEA</variation>
    <location>
        <position position="62"/>
    </location>
</feature>
<accession>B6U300</accession>
<name>CSPLH_MAIZE</name>
<dbReference type="EMBL" id="EU971615">
    <property type="protein sequence ID" value="ACG43733.1"/>
    <property type="molecule type" value="mRNA"/>
</dbReference>
<dbReference type="EMBL" id="FL249491">
    <property type="status" value="NOT_ANNOTATED_CDS"/>
    <property type="molecule type" value="mRNA"/>
</dbReference>
<dbReference type="RefSeq" id="NP_001144895.1">
    <property type="nucleotide sequence ID" value="NM_001151423.1"/>
</dbReference>
<dbReference type="RefSeq" id="XP_008671839.1">
    <property type="nucleotide sequence ID" value="XM_008673617.1"/>
</dbReference>
<dbReference type="FunCoup" id="B6U300">
    <property type="interactions" value="1171"/>
</dbReference>
<dbReference type="STRING" id="4577.B6U300"/>
<dbReference type="PaxDb" id="4577-GRMZM2G039978_P01"/>
<dbReference type="EnsemblPlants" id="Zm00001eb058720_T003">
    <molecule id="B6U300-1"/>
    <property type="protein sequence ID" value="Zm00001eb058720_P003"/>
    <property type="gene ID" value="Zm00001eb058720"/>
</dbReference>
<dbReference type="Gramene" id="Zm00001eb058720_T003">
    <molecule id="B6U300-1"/>
    <property type="protein sequence ID" value="Zm00001eb058720_P003"/>
    <property type="gene ID" value="Zm00001eb058720"/>
</dbReference>
<dbReference type="eggNOG" id="ENOG502RYBF">
    <property type="taxonomic scope" value="Eukaryota"/>
</dbReference>
<dbReference type="HOGENOM" id="CLU_103961_1_0_1"/>
<dbReference type="InParanoid" id="B6U300"/>
<dbReference type="OMA" id="PKFCGRY"/>
<dbReference type="Proteomes" id="UP000007305">
    <property type="component" value="Chromosome 1"/>
</dbReference>
<dbReference type="ExpressionAtlas" id="B6U300">
    <property type="expression patterns" value="baseline and differential"/>
</dbReference>
<dbReference type="GO" id="GO:0016020">
    <property type="term" value="C:membrane"/>
    <property type="evidence" value="ECO:0000318"/>
    <property type="project" value="GO_Central"/>
</dbReference>
<dbReference type="GO" id="GO:0005886">
    <property type="term" value="C:plasma membrane"/>
    <property type="evidence" value="ECO:0007669"/>
    <property type="project" value="UniProtKB-SubCell"/>
</dbReference>
<dbReference type="InterPro" id="IPR006702">
    <property type="entry name" value="CASP_dom"/>
</dbReference>
<dbReference type="InterPro" id="IPR045009">
    <property type="entry name" value="CASPL-5"/>
</dbReference>
<dbReference type="PANTHER" id="PTHR32021">
    <property type="entry name" value="CASP-LIKE PROTEIN 5B3"/>
    <property type="match status" value="1"/>
</dbReference>
<dbReference type="PANTHER" id="PTHR32021:SF30">
    <property type="entry name" value="CASP-LIKE PROTEIN 5C1"/>
    <property type="match status" value="1"/>
</dbReference>
<dbReference type="Pfam" id="PF04535">
    <property type="entry name" value="CASP_dom"/>
    <property type="match status" value="1"/>
</dbReference>